<dbReference type="EC" id="4.2.3.4" evidence="1"/>
<dbReference type="EMBL" id="AM295250">
    <property type="protein sequence ID" value="CAL28007.1"/>
    <property type="molecule type" value="Genomic_DNA"/>
</dbReference>
<dbReference type="RefSeq" id="WP_015900348.1">
    <property type="nucleotide sequence ID" value="NC_012121.1"/>
</dbReference>
<dbReference type="SMR" id="B9DNV1"/>
<dbReference type="GeneID" id="93793525"/>
<dbReference type="KEGG" id="sca:SCA_1099"/>
<dbReference type="eggNOG" id="COG0337">
    <property type="taxonomic scope" value="Bacteria"/>
</dbReference>
<dbReference type="HOGENOM" id="CLU_001201_0_1_9"/>
<dbReference type="OrthoDB" id="9806583at2"/>
<dbReference type="BioCyc" id="SCAR396513:SCA_RS05505-MONOMER"/>
<dbReference type="UniPathway" id="UPA00053">
    <property type="reaction ID" value="UER00085"/>
</dbReference>
<dbReference type="Proteomes" id="UP000000444">
    <property type="component" value="Chromosome"/>
</dbReference>
<dbReference type="GO" id="GO:0005737">
    <property type="term" value="C:cytoplasm"/>
    <property type="evidence" value="ECO:0007669"/>
    <property type="project" value="UniProtKB-SubCell"/>
</dbReference>
<dbReference type="GO" id="GO:0003856">
    <property type="term" value="F:3-dehydroquinate synthase activity"/>
    <property type="evidence" value="ECO:0007669"/>
    <property type="project" value="UniProtKB-UniRule"/>
</dbReference>
<dbReference type="GO" id="GO:0046872">
    <property type="term" value="F:metal ion binding"/>
    <property type="evidence" value="ECO:0007669"/>
    <property type="project" value="UniProtKB-KW"/>
</dbReference>
<dbReference type="GO" id="GO:0000166">
    <property type="term" value="F:nucleotide binding"/>
    <property type="evidence" value="ECO:0007669"/>
    <property type="project" value="UniProtKB-KW"/>
</dbReference>
<dbReference type="GO" id="GO:0008652">
    <property type="term" value="P:amino acid biosynthetic process"/>
    <property type="evidence" value="ECO:0007669"/>
    <property type="project" value="UniProtKB-KW"/>
</dbReference>
<dbReference type="GO" id="GO:0009073">
    <property type="term" value="P:aromatic amino acid family biosynthetic process"/>
    <property type="evidence" value="ECO:0007669"/>
    <property type="project" value="UniProtKB-KW"/>
</dbReference>
<dbReference type="GO" id="GO:0009423">
    <property type="term" value="P:chorismate biosynthetic process"/>
    <property type="evidence" value="ECO:0007669"/>
    <property type="project" value="UniProtKB-UniRule"/>
</dbReference>
<dbReference type="CDD" id="cd08195">
    <property type="entry name" value="DHQS"/>
    <property type="match status" value="1"/>
</dbReference>
<dbReference type="FunFam" id="3.40.50.1970:FF:000007">
    <property type="entry name" value="Pentafunctional AROM polypeptide"/>
    <property type="match status" value="1"/>
</dbReference>
<dbReference type="Gene3D" id="3.40.50.1970">
    <property type="match status" value="1"/>
</dbReference>
<dbReference type="Gene3D" id="1.20.1090.10">
    <property type="entry name" value="Dehydroquinate synthase-like - alpha domain"/>
    <property type="match status" value="1"/>
</dbReference>
<dbReference type="HAMAP" id="MF_00110">
    <property type="entry name" value="DHQ_synthase"/>
    <property type="match status" value="1"/>
</dbReference>
<dbReference type="InterPro" id="IPR050071">
    <property type="entry name" value="Dehydroquinate_synthase"/>
</dbReference>
<dbReference type="InterPro" id="IPR016037">
    <property type="entry name" value="DHQ_synth_AroB"/>
</dbReference>
<dbReference type="InterPro" id="IPR030963">
    <property type="entry name" value="DHQ_synth_fam"/>
</dbReference>
<dbReference type="InterPro" id="IPR030960">
    <property type="entry name" value="DHQS/DOIS_N"/>
</dbReference>
<dbReference type="InterPro" id="IPR056179">
    <property type="entry name" value="DHQS_C"/>
</dbReference>
<dbReference type="NCBIfam" id="TIGR01357">
    <property type="entry name" value="aroB"/>
    <property type="match status" value="1"/>
</dbReference>
<dbReference type="PANTHER" id="PTHR43622">
    <property type="entry name" value="3-DEHYDROQUINATE SYNTHASE"/>
    <property type="match status" value="1"/>
</dbReference>
<dbReference type="PANTHER" id="PTHR43622:SF7">
    <property type="entry name" value="3-DEHYDROQUINATE SYNTHASE, CHLOROPLASTIC"/>
    <property type="match status" value="1"/>
</dbReference>
<dbReference type="Pfam" id="PF01761">
    <property type="entry name" value="DHQ_synthase"/>
    <property type="match status" value="1"/>
</dbReference>
<dbReference type="Pfam" id="PF24621">
    <property type="entry name" value="DHQS_C"/>
    <property type="match status" value="1"/>
</dbReference>
<dbReference type="PIRSF" id="PIRSF001455">
    <property type="entry name" value="DHQ_synth"/>
    <property type="match status" value="1"/>
</dbReference>
<dbReference type="SUPFAM" id="SSF56796">
    <property type="entry name" value="Dehydroquinate synthase-like"/>
    <property type="match status" value="1"/>
</dbReference>
<evidence type="ECO:0000255" key="1">
    <source>
        <dbReference type="HAMAP-Rule" id="MF_00110"/>
    </source>
</evidence>
<protein>
    <recommendedName>
        <fullName evidence="1">3-dehydroquinate synthase</fullName>
        <shortName evidence="1">DHQS</shortName>
        <ecNumber evidence="1">4.2.3.4</ecNumber>
    </recommendedName>
</protein>
<keyword id="KW-0028">Amino-acid biosynthesis</keyword>
<keyword id="KW-0057">Aromatic amino acid biosynthesis</keyword>
<keyword id="KW-0170">Cobalt</keyword>
<keyword id="KW-0963">Cytoplasm</keyword>
<keyword id="KW-0456">Lyase</keyword>
<keyword id="KW-0479">Metal-binding</keyword>
<keyword id="KW-0520">NAD</keyword>
<keyword id="KW-0547">Nucleotide-binding</keyword>
<keyword id="KW-1185">Reference proteome</keyword>
<keyword id="KW-0862">Zinc</keyword>
<accession>B9DNV1</accession>
<organism>
    <name type="scientific">Staphylococcus carnosus (strain TM300)</name>
    <dbReference type="NCBI Taxonomy" id="396513"/>
    <lineage>
        <taxon>Bacteria</taxon>
        <taxon>Bacillati</taxon>
        <taxon>Bacillota</taxon>
        <taxon>Bacilli</taxon>
        <taxon>Bacillales</taxon>
        <taxon>Staphylococcaceae</taxon>
        <taxon>Staphylococcus</taxon>
    </lineage>
</organism>
<sequence length="358" mass="40298">MELMTTYKSNNYPIIIKNNAITELTELLKPYRDVVFIVDKNVEFALPEKIQQALSSTSSEQFTHILKVEGNETTKTFAVYQHIIEELLEQSITRNTCIIAIGGGVIGDFAGFVAATILRGVDFIQVPTTILAHDSSVGGKVGINTPQGKNLVGAFYRPTAVLYDLDFLNTLPYTEISSGYAEVYKHALLNGEEAQLEIETAFPDKKALESLVSLDKFLLKGIQTKLNIVIEDEHEQGKRKFLNLGHTFGHAIEYNQKIPHGHAVMIGILYQFIVANELLNTQFDIMHYINYFKNLDYPLEKVLDTNFEPLLALMSKDKKNDKSGIQMVLLKEIGKPKVIHVNNEVLEKSFATLQNYLK</sequence>
<reference key="1">
    <citation type="journal article" date="2009" name="Appl. Environ. Microbiol.">
        <title>Genome analysis of the meat starter culture bacterium Staphylococcus carnosus TM300.</title>
        <authorList>
            <person name="Rosenstein R."/>
            <person name="Nerz C."/>
            <person name="Biswas L."/>
            <person name="Resch A."/>
            <person name="Raddatz G."/>
            <person name="Schuster S.C."/>
            <person name="Goetz F."/>
        </authorList>
    </citation>
    <scope>NUCLEOTIDE SEQUENCE [LARGE SCALE GENOMIC DNA]</scope>
    <source>
        <strain>TM300</strain>
    </source>
</reference>
<comment type="function">
    <text evidence="1">Catalyzes the conversion of 3-deoxy-D-arabino-heptulosonate 7-phosphate (DAHP) to dehydroquinate (DHQ).</text>
</comment>
<comment type="catalytic activity">
    <reaction evidence="1">
        <text>7-phospho-2-dehydro-3-deoxy-D-arabino-heptonate = 3-dehydroquinate + phosphate</text>
        <dbReference type="Rhea" id="RHEA:21968"/>
        <dbReference type="ChEBI" id="CHEBI:32364"/>
        <dbReference type="ChEBI" id="CHEBI:43474"/>
        <dbReference type="ChEBI" id="CHEBI:58394"/>
        <dbReference type="EC" id="4.2.3.4"/>
    </reaction>
</comment>
<comment type="cofactor">
    <cofactor evidence="1">
        <name>Co(2+)</name>
        <dbReference type="ChEBI" id="CHEBI:48828"/>
    </cofactor>
    <cofactor evidence="1">
        <name>Zn(2+)</name>
        <dbReference type="ChEBI" id="CHEBI:29105"/>
    </cofactor>
    <text evidence="1">Binds 1 divalent metal cation per subunit. Can use either Co(2+) or Zn(2+).</text>
</comment>
<comment type="cofactor">
    <cofactor evidence="1">
        <name>NAD(+)</name>
        <dbReference type="ChEBI" id="CHEBI:57540"/>
    </cofactor>
</comment>
<comment type="pathway">
    <text evidence="1">Metabolic intermediate biosynthesis; chorismate biosynthesis; chorismate from D-erythrose 4-phosphate and phosphoenolpyruvate: step 2/7.</text>
</comment>
<comment type="subcellular location">
    <subcellularLocation>
        <location evidence="1">Cytoplasm</location>
    </subcellularLocation>
</comment>
<comment type="similarity">
    <text evidence="1">Belongs to the sugar phosphate cyclases superfamily. Dehydroquinate synthase family.</text>
</comment>
<feature type="chain" id="PRO_1000119091" description="3-dehydroquinate synthase">
    <location>
        <begin position="1"/>
        <end position="358"/>
    </location>
</feature>
<feature type="binding site" evidence="1">
    <location>
        <begin position="104"/>
        <end position="108"/>
    </location>
    <ligand>
        <name>NAD(+)</name>
        <dbReference type="ChEBI" id="CHEBI:57540"/>
    </ligand>
</feature>
<feature type="binding site" evidence="1">
    <location>
        <begin position="128"/>
        <end position="129"/>
    </location>
    <ligand>
        <name>NAD(+)</name>
        <dbReference type="ChEBI" id="CHEBI:57540"/>
    </ligand>
</feature>
<feature type="binding site" evidence="1">
    <location>
        <position position="140"/>
    </location>
    <ligand>
        <name>NAD(+)</name>
        <dbReference type="ChEBI" id="CHEBI:57540"/>
    </ligand>
</feature>
<feature type="binding site" evidence="1">
    <location>
        <position position="149"/>
    </location>
    <ligand>
        <name>NAD(+)</name>
        <dbReference type="ChEBI" id="CHEBI:57540"/>
    </ligand>
</feature>
<feature type="binding site" evidence="1">
    <location>
        <begin position="167"/>
        <end position="170"/>
    </location>
    <ligand>
        <name>NAD(+)</name>
        <dbReference type="ChEBI" id="CHEBI:57540"/>
    </ligand>
</feature>
<feature type="binding site" evidence="1">
    <location>
        <position position="182"/>
    </location>
    <ligand>
        <name>Zn(2+)</name>
        <dbReference type="ChEBI" id="CHEBI:29105"/>
    </ligand>
</feature>
<feature type="binding site" evidence="1">
    <location>
        <position position="246"/>
    </location>
    <ligand>
        <name>Zn(2+)</name>
        <dbReference type="ChEBI" id="CHEBI:29105"/>
    </ligand>
</feature>
<feature type="binding site" evidence="1">
    <location>
        <position position="260"/>
    </location>
    <ligand>
        <name>Zn(2+)</name>
        <dbReference type="ChEBI" id="CHEBI:29105"/>
    </ligand>
</feature>
<gene>
    <name evidence="1" type="primary">aroB</name>
    <name type="ordered locus">Sca_1099</name>
</gene>
<proteinExistence type="inferred from homology"/>
<name>AROB_STACT</name>